<evidence type="ECO:0000250" key="1"/>
<evidence type="ECO:0000255" key="2"/>
<evidence type="ECO:0000305" key="3"/>
<dbReference type="EC" id="3.5.2.17"/>
<dbReference type="EMBL" id="Z77134">
    <property type="protein sequence ID" value="CAB00872.2"/>
    <property type="molecule type" value="Genomic_DNA"/>
</dbReference>
<dbReference type="EMBL" id="Z77134">
    <property type="protein sequence ID" value="CAJ90503.1"/>
    <property type="molecule type" value="Genomic_DNA"/>
</dbReference>
<dbReference type="PIR" id="T24096">
    <property type="entry name" value="T24096"/>
</dbReference>
<dbReference type="RefSeq" id="NP_001040980.1">
    <molecule id="Q21882-1"/>
    <property type="nucleotide sequence ID" value="NM_001047515.6"/>
</dbReference>
<dbReference type="RefSeq" id="NP_001040981.1">
    <molecule id="Q21882-2"/>
    <property type="nucleotide sequence ID" value="NM_001047516.5"/>
</dbReference>
<dbReference type="SMR" id="Q21882"/>
<dbReference type="BioGRID" id="52440">
    <property type="interactions" value="8"/>
</dbReference>
<dbReference type="FunCoup" id="Q21882">
    <property type="interactions" value="114"/>
</dbReference>
<dbReference type="IntAct" id="Q21882">
    <property type="interactions" value="3"/>
</dbReference>
<dbReference type="STRING" id="6239.R09H10.3a.1"/>
<dbReference type="PaxDb" id="6239-R09H10.3a"/>
<dbReference type="PeptideAtlas" id="Q21882"/>
<dbReference type="EnsemblMetazoa" id="R09H10.3a.1">
    <molecule id="Q21882-1"/>
    <property type="protein sequence ID" value="R09H10.3a.1"/>
    <property type="gene ID" value="WBGene00011181"/>
</dbReference>
<dbReference type="EnsemblMetazoa" id="R09H10.3b.1">
    <molecule id="Q21882-2"/>
    <property type="protein sequence ID" value="R09H10.3b.1"/>
    <property type="gene ID" value="WBGene00011181"/>
</dbReference>
<dbReference type="GeneID" id="187757"/>
<dbReference type="KEGG" id="cel:CELE_R09H10.3"/>
<dbReference type="UCSC" id="R09H10.3a.1">
    <molecule id="Q21882-1"/>
    <property type="organism name" value="c. elegans"/>
</dbReference>
<dbReference type="AGR" id="WB:WBGene00011181"/>
<dbReference type="CTD" id="187757"/>
<dbReference type="WormBase" id="R09H10.3a">
    <molecule id="Q21882-1"/>
    <property type="protein sequence ID" value="CE34083"/>
    <property type="gene ID" value="WBGene00011181"/>
</dbReference>
<dbReference type="WormBase" id="R09H10.3b">
    <molecule id="Q21882-2"/>
    <property type="protein sequence ID" value="CE12662"/>
    <property type="gene ID" value="WBGene00011181"/>
</dbReference>
<dbReference type="eggNOG" id="KOG3006">
    <property type="taxonomic scope" value="Eukaryota"/>
</dbReference>
<dbReference type="GeneTree" id="ENSGT00940000153229"/>
<dbReference type="InParanoid" id="Q21882"/>
<dbReference type="OMA" id="RFSFSTY"/>
<dbReference type="OrthoDB" id="10265230at2759"/>
<dbReference type="PhylomeDB" id="Q21882"/>
<dbReference type="Reactome" id="R-CEL-3000171">
    <property type="pathway name" value="Non-integrin membrane-ECM interactions"/>
</dbReference>
<dbReference type="Reactome" id="R-CEL-6798695">
    <property type="pathway name" value="Neutrophil degranulation"/>
</dbReference>
<dbReference type="Reactome" id="R-CEL-975634">
    <property type="pathway name" value="Retinoid metabolism and transport"/>
</dbReference>
<dbReference type="PRO" id="PR:Q21882"/>
<dbReference type="Proteomes" id="UP000001940">
    <property type="component" value="Chromosome IV"/>
</dbReference>
<dbReference type="Bgee" id="WBGene00011181">
    <property type="expression patterns" value="Expressed in larva and 4 other cell types or tissues"/>
</dbReference>
<dbReference type="GO" id="GO:0033971">
    <property type="term" value="F:hydroxyisourate hydrolase activity"/>
    <property type="evidence" value="ECO:0007669"/>
    <property type="project" value="UniProtKB-EC"/>
</dbReference>
<dbReference type="GO" id="GO:0042802">
    <property type="term" value="F:identical protein binding"/>
    <property type="evidence" value="ECO:0000353"/>
    <property type="project" value="IntAct"/>
</dbReference>
<dbReference type="GO" id="GO:0006144">
    <property type="term" value="P:purine nucleobase metabolic process"/>
    <property type="evidence" value="ECO:0000318"/>
    <property type="project" value="GO_Central"/>
</dbReference>
<dbReference type="CDD" id="cd05822">
    <property type="entry name" value="TLP_HIUase"/>
    <property type="match status" value="1"/>
</dbReference>
<dbReference type="FunFam" id="2.60.40.180:FF:000011">
    <property type="entry name" value="Probable 5-hydroxyisourate hydrolase R09H10.3"/>
    <property type="match status" value="1"/>
</dbReference>
<dbReference type="Gene3D" id="2.60.40.180">
    <property type="entry name" value="Transthyretin/hydroxyisourate hydrolase domain"/>
    <property type="match status" value="1"/>
</dbReference>
<dbReference type="InterPro" id="IPR014306">
    <property type="entry name" value="Hydroxyisourate_hydrolase"/>
</dbReference>
<dbReference type="InterPro" id="IPR023418">
    <property type="entry name" value="Thyroxine_BS"/>
</dbReference>
<dbReference type="InterPro" id="IPR000895">
    <property type="entry name" value="Transthyretin/HIU_hydrolase"/>
</dbReference>
<dbReference type="InterPro" id="IPR023416">
    <property type="entry name" value="Transthyretin/HIU_hydrolase_d"/>
</dbReference>
<dbReference type="InterPro" id="IPR036817">
    <property type="entry name" value="Transthyretin/HIU_hydrolase_sf"/>
</dbReference>
<dbReference type="InterPro" id="IPR023419">
    <property type="entry name" value="Transthyretin_CS"/>
</dbReference>
<dbReference type="NCBIfam" id="TIGR02962">
    <property type="entry name" value="hdxy_isourate"/>
    <property type="match status" value="1"/>
</dbReference>
<dbReference type="PANTHER" id="PTHR10395:SF7">
    <property type="entry name" value="5-HYDROXYISOURATE HYDROLASE"/>
    <property type="match status" value="1"/>
</dbReference>
<dbReference type="PANTHER" id="PTHR10395">
    <property type="entry name" value="URICASE AND TRANSTHYRETIN-RELATED"/>
    <property type="match status" value="1"/>
</dbReference>
<dbReference type="Pfam" id="PF00576">
    <property type="entry name" value="Transthyretin"/>
    <property type="match status" value="1"/>
</dbReference>
<dbReference type="PRINTS" id="PR00189">
    <property type="entry name" value="TRNSTHYRETIN"/>
</dbReference>
<dbReference type="SMART" id="SM00095">
    <property type="entry name" value="TR_THY"/>
    <property type="match status" value="1"/>
</dbReference>
<dbReference type="SUPFAM" id="SSF49472">
    <property type="entry name" value="Transthyretin (synonym: prealbumin)"/>
    <property type="match status" value="1"/>
</dbReference>
<dbReference type="PROSITE" id="PS00768">
    <property type="entry name" value="TRANSTHYRETIN_1"/>
    <property type="match status" value="1"/>
</dbReference>
<dbReference type="PROSITE" id="PS00769">
    <property type="entry name" value="TRANSTHYRETIN_2"/>
    <property type="match status" value="1"/>
</dbReference>
<protein>
    <recommendedName>
        <fullName>Probable 5-hydroxyisourate hydrolase R09H10.3</fullName>
        <shortName>HIU hydrolase</shortName>
        <shortName>HIUHase</shortName>
        <ecNumber>3.5.2.17</ecNumber>
    </recommendedName>
    <alternativeName>
        <fullName>Transthyretin-like protein R09H10.3</fullName>
    </alternativeName>
</protein>
<feature type="signal peptide" evidence="2">
    <location>
        <begin position="1"/>
        <end position="20"/>
    </location>
</feature>
<feature type="chain" id="PRO_0000050603" description="Probable 5-hydroxyisourate hydrolase R09H10.3">
    <location>
        <begin position="21"/>
        <end position="135"/>
    </location>
</feature>
<feature type="binding site" evidence="1">
    <location>
        <position position="30"/>
    </location>
    <ligand>
        <name>substrate</name>
    </ligand>
</feature>
<feature type="binding site" evidence="1">
    <location>
        <position position="68"/>
    </location>
    <ligand>
        <name>substrate</name>
    </ligand>
</feature>
<feature type="binding site" evidence="1">
    <location>
        <position position="132"/>
    </location>
    <ligand>
        <name>substrate</name>
    </ligand>
</feature>
<feature type="splice variant" id="VSP_020154" description="In isoform b." evidence="3">
    <location>
        <begin position="1"/>
        <end position="14"/>
    </location>
</feature>
<name>HIUH1_CAEEL</name>
<reference key="1">
    <citation type="journal article" date="1998" name="Science">
        <title>Genome sequence of the nematode C. elegans: a platform for investigating biology.</title>
        <authorList>
            <consortium name="The C. elegans sequencing consortium"/>
        </authorList>
    </citation>
    <scope>NUCLEOTIDE SEQUENCE [LARGE SCALE GENOMIC DNA]</scope>
    <scope>ALTERNATIVE SPLICING</scope>
    <source>
        <strain>Bristol N2</strain>
    </source>
</reference>
<comment type="function">
    <text evidence="1">Catalyzes the hydrolysis of 5-hydroxyisourate (HIU) to 2-oxo-4-hydroxy-4-carboxy-5-ureidoimidazoline (OHCU).</text>
</comment>
<comment type="catalytic activity">
    <reaction>
        <text>5-hydroxyisourate + H2O = 5-hydroxy-2-oxo-4-ureido-2,5-dihydro-1H-imidazole-5-carboxylate + H(+)</text>
        <dbReference type="Rhea" id="RHEA:23736"/>
        <dbReference type="ChEBI" id="CHEBI:15377"/>
        <dbReference type="ChEBI" id="CHEBI:15378"/>
        <dbReference type="ChEBI" id="CHEBI:18072"/>
        <dbReference type="ChEBI" id="CHEBI:58639"/>
        <dbReference type="EC" id="3.5.2.17"/>
    </reaction>
</comment>
<comment type="subunit">
    <text evidence="1">Homotetramer.</text>
</comment>
<comment type="interaction">
    <interactant intactId="EBI-311857">
        <id>Q21882</id>
    </interactant>
    <interactant intactId="EBI-2315916">
        <id>G5ED33</id>
        <label>eps-8</label>
    </interactant>
    <organismsDiffer>false</organismsDiffer>
    <experiments>3</experiments>
</comment>
<comment type="interaction">
    <interactant intactId="EBI-311857">
        <id>Q21882</id>
    </interactant>
    <interactant intactId="EBI-311857">
        <id>Q21882</id>
        <label>R09H10.3</label>
    </interactant>
    <organismsDiffer>false</organismsDiffer>
    <experiments>2</experiments>
</comment>
<comment type="alternative products">
    <event type="alternative splicing"/>
    <isoform>
        <id>Q21882-1</id>
        <name>a</name>
        <sequence type="displayed"/>
    </isoform>
    <isoform>
        <id>Q21882-2</id>
        <name>b</name>
        <sequence type="described" ref="VSP_020154"/>
    </isoform>
</comment>
<comment type="miscellaneous">
    <text>HIU hydrolysis also occurs spontaneously, but more slowly.</text>
</comment>
<comment type="similarity">
    <text evidence="3">Belongs to the transthyretin family. 5-hydroxyisourate hydrolase subfamily.</text>
</comment>
<proteinExistence type="evidence at protein level"/>
<keyword id="KW-0025">Alternative splicing</keyword>
<keyword id="KW-0378">Hydrolase</keyword>
<keyword id="KW-0659">Purine metabolism</keyword>
<keyword id="KW-1185">Reference proteome</keyword>
<keyword id="KW-0732">Signal</keyword>
<organism>
    <name type="scientific">Caenorhabditis elegans</name>
    <dbReference type="NCBI Taxonomy" id="6239"/>
    <lineage>
        <taxon>Eukaryota</taxon>
        <taxon>Metazoa</taxon>
        <taxon>Ecdysozoa</taxon>
        <taxon>Nematoda</taxon>
        <taxon>Chromadorea</taxon>
        <taxon>Rhabditida</taxon>
        <taxon>Rhabditina</taxon>
        <taxon>Rhabditomorpha</taxon>
        <taxon>Rhabditoidea</taxon>
        <taxon>Rhabditidae</taxon>
        <taxon>Peloderinae</taxon>
        <taxon>Caenorhabditis</taxon>
    </lineage>
</organism>
<gene>
    <name type="ORF">R09H10.3</name>
</gene>
<sequence length="135" mass="15129">MNKFSLFFALTATLMTITESAVPTASISAHVLDISGGSPAGGVQILAYIQQNDDWTKIGSEFTQDNGRVDWVSPDFTLIPGTYRLVYITEPYYKAKNVESFYPYVEVVFNIRDATQHYHVPLTLSPWGYSTYRGS</sequence>
<accession>Q21882</accession>
<accession>Q1NZ16</accession>